<dbReference type="EMBL" id="BA000022">
    <property type="protein sequence ID" value="BAA16959.1"/>
    <property type="molecule type" value="Genomic_DNA"/>
</dbReference>
<dbReference type="PIR" id="S74919">
    <property type="entry name" value="S74919"/>
</dbReference>
<dbReference type="SMR" id="P72942"/>
<dbReference type="STRING" id="1148.gene:10497819"/>
<dbReference type="PaxDb" id="1148-1652034"/>
<dbReference type="EnsemblBacteria" id="BAA16959">
    <property type="protein sequence ID" value="BAA16959"/>
    <property type="gene ID" value="BAA16959"/>
</dbReference>
<dbReference type="KEGG" id="syn:slr0678"/>
<dbReference type="eggNOG" id="COG0848">
    <property type="taxonomic scope" value="Bacteria"/>
</dbReference>
<dbReference type="InParanoid" id="P72942"/>
<dbReference type="Proteomes" id="UP000001425">
    <property type="component" value="Chromosome"/>
</dbReference>
<dbReference type="GO" id="GO:0005886">
    <property type="term" value="C:plasma membrane"/>
    <property type="evidence" value="ECO:0000318"/>
    <property type="project" value="GO_Central"/>
</dbReference>
<dbReference type="GO" id="GO:0022857">
    <property type="term" value="F:transmembrane transporter activity"/>
    <property type="evidence" value="ECO:0007669"/>
    <property type="project" value="InterPro"/>
</dbReference>
<dbReference type="GO" id="GO:0015031">
    <property type="term" value="P:protein transport"/>
    <property type="evidence" value="ECO:0007669"/>
    <property type="project" value="UniProtKB-KW"/>
</dbReference>
<dbReference type="Gene3D" id="3.30.420.270">
    <property type="match status" value="1"/>
</dbReference>
<dbReference type="InterPro" id="IPR003400">
    <property type="entry name" value="ExbD"/>
</dbReference>
<dbReference type="PANTHER" id="PTHR30558:SF3">
    <property type="entry name" value="BIOPOLYMER TRANSPORT PROTEIN EXBD-RELATED"/>
    <property type="match status" value="1"/>
</dbReference>
<dbReference type="PANTHER" id="PTHR30558">
    <property type="entry name" value="EXBD MEMBRANE COMPONENT OF PMF-DRIVEN MACROMOLECULE IMPORT SYSTEM"/>
    <property type="match status" value="1"/>
</dbReference>
<dbReference type="Pfam" id="PF02472">
    <property type="entry name" value="ExbD"/>
    <property type="match status" value="1"/>
</dbReference>
<evidence type="ECO:0000255" key="1"/>
<evidence type="ECO:0000256" key="2">
    <source>
        <dbReference type="SAM" id="MobiDB-lite"/>
    </source>
</evidence>
<evidence type="ECO:0000305" key="3"/>
<feature type="chain" id="PRO_0000129131" description="Putative biopolymer transport protein ExbD">
    <location>
        <begin position="1"/>
        <end position="269"/>
    </location>
</feature>
<feature type="topological domain" description="Cytoplasmic" evidence="1">
    <location>
        <begin position="1"/>
        <end position="40"/>
    </location>
</feature>
<feature type="transmembrane region" description="Helical" evidence="1">
    <location>
        <begin position="41"/>
        <end position="61"/>
    </location>
</feature>
<feature type="topological domain" description="Periplasmic" evidence="1">
    <location>
        <begin position="62"/>
        <end position="269"/>
    </location>
</feature>
<feature type="region of interest" description="Disordered" evidence="2">
    <location>
        <begin position="190"/>
        <end position="269"/>
    </location>
</feature>
<feature type="compositionally biased region" description="Low complexity" evidence="2">
    <location>
        <begin position="193"/>
        <end position="204"/>
    </location>
</feature>
<organism>
    <name type="scientific">Synechocystis sp. (strain ATCC 27184 / PCC 6803 / Kazusa)</name>
    <dbReference type="NCBI Taxonomy" id="1111708"/>
    <lineage>
        <taxon>Bacteria</taxon>
        <taxon>Bacillati</taxon>
        <taxon>Cyanobacteriota</taxon>
        <taxon>Cyanophyceae</taxon>
        <taxon>Synechococcales</taxon>
        <taxon>Merismopediaceae</taxon>
        <taxon>Synechocystis</taxon>
    </lineage>
</organism>
<accession>P72942</accession>
<sequence>MASSPKAPKSHRKFQSIYHPTRPLSLWQDNQHDQGEVRIEIIPLIDVVFCILTFFILGAVGLSRQQAISLDLPRASTGAPQMREMFMVSLDDLGQLYVEKQPVSQEQMVSALQNYHQYNPSGLIVLHASRNASYNDVVQLLDTLRTVGGDRVALATLPGDGQTPSGMNPNSFNNPNLGLPGMTPGNAFPNGANPGMSNFNNSNPGGSGAGVPNFSNTPLPGMPDANGNVSPNPGMNPGFPGGGAMSPDPNSQSPNLPGMGNTVPSAPQQ</sequence>
<proteinExistence type="inferred from homology"/>
<comment type="subcellular location">
    <subcellularLocation>
        <location evidence="3">Cell inner membrane</location>
        <topology evidence="3">Single-pass type II membrane protein</topology>
    </subcellularLocation>
</comment>
<comment type="similarity">
    <text evidence="3">Belongs to the ExbD/TolR family.</text>
</comment>
<name>EXBD_SYNY3</name>
<keyword id="KW-0997">Cell inner membrane</keyword>
<keyword id="KW-1003">Cell membrane</keyword>
<keyword id="KW-0472">Membrane</keyword>
<keyword id="KW-0653">Protein transport</keyword>
<keyword id="KW-1185">Reference proteome</keyword>
<keyword id="KW-0812">Transmembrane</keyword>
<keyword id="KW-1133">Transmembrane helix</keyword>
<keyword id="KW-0813">Transport</keyword>
<reference key="1">
    <citation type="journal article" date="1996" name="DNA Res.">
        <title>Sequence analysis of the genome of the unicellular cyanobacterium Synechocystis sp. strain PCC6803. II. Sequence determination of the entire genome and assignment of potential protein-coding regions.</title>
        <authorList>
            <person name="Kaneko T."/>
            <person name="Sato S."/>
            <person name="Kotani H."/>
            <person name="Tanaka A."/>
            <person name="Asamizu E."/>
            <person name="Nakamura Y."/>
            <person name="Miyajima N."/>
            <person name="Hirosawa M."/>
            <person name="Sugiura M."/>
            <person name="Sasamoto S."/>
            <person name="Kimura T."/>
            <person name="Hosouchi T."/>
            <person name="Matsuno A."/>
            <person name="Muraki A."/>
            <person name="Nakazaki N."/>
            <person name="Naruo K."/>
            <person name="Okumura S."/>
            <person name="Shimpo S."/>
            <person name="Takeuchi C."/>
            <person name="Wada T."/>
            <person name="Watanabe A."/>
            <person name="Yamada M."/>
            <person name="Yasuda M."/>
            <person name="Tabata S."/>
        </authorList>
    </citation>
    <scope>NUCLEOTIDE SEQUENCE [LARGE SCALE GENOMIC DNA]</scope>
    <source>
        <strain>ATCC 27184 / PCC 6803 / Kazusa</strain>
    </source>
</reference>
<gene>
    <name type="ordered locus">slr0678</name>
</gene>
<protein>
    <recommendedName>
        <fullName>Putative biopolymer transport protein ExbD</fullName>
    </recommendedName>
</protein>